<reference key="1">
    <citation type="journal article" date="2008" name="Genome Biol.">
        <title>The genome sequence of the model ascomycete fungus Podospora anserina.</title>
        <authorList>
            <person name="Espagne E."/>
            <person name="Lespinet O."/>
            <person name="Malagnac F."/>
            <person name="Da Silva C."/>
            <person name="Jaillon O."/>
            <person name="Porcel B.M."/>
            <person name="Couloux A."/>
            <person name="Aury J.-M."/>
            <person name="Segurens B."/>
            <person name="Poulain J."/>
            <person name="Anthouard V."/>
            <person name="Grossetete S."/>
            <person name="Khalili H."/>
            <person name="Coppin E."/>
            <person name="Dequard-Chablat M."/>
            <person name="Picard M."/>
            <person name="Contamine V."/>
            <person name="Arnaise S."/>
            <person name="Bourdais A."/>
            <person name="Berteaux-Lecellier V."/>
            <person name="Gautheret D."/>
            <person name="de Vries R.P."/>
            <person name="Battaglia E."/>
            <person name="Coutinho P.M."/>
            <person name="Danchin E.G.J."/>
            <person name="Henrissat B."/>
            <person name="El Khoury R."/>
            <person name="Sainsard-Chanet A."/>
            <person name="Boivin A."/>
            <person name="Pinan-Lucarre B."/>
            <person name="Sellem C.H."/>
            <person name="Debuchy R."/>
            <person name="Wincker P."/>
            <person name="Weissenbach J."/>
            <person name="Silar P."/>
        </authorList>
    </citation>
    <scope>NUCLEOTIDE SEQUENCE [LARGE SCALE GENOMIC DNA]</scope>
    <source>
        <strain>S / ATCC MYA-4624 / DSM 980 / FGSC 10383</strain>
    </source>
</reference>
<reference key="2">
    <citation type="journal article" date="2014" name="Genetics">
        <title>Maintaining two mating types: Structure of the mating type locus and its role in heterokaryosis in Podospora anserina.</title>
        <authorList>
            <person name="Grognet P."/>
            <person name="Bidard F."/>
            <person name="Kuchly C."/>
            <person name="Tong L.C.H."/>
            <person name="Coppin E."/>
            <person name="Benkhali J.A."/>
            <person name="Couloux A."/>
            <person name="Wincker P."/>
            <person name="Debuchy R."/>
            <person name="Silar P."/>
        </authorList>
    </citation>
    <scope>GENOME REANNOTATION</scope>
    <source>
        <strain>S / ATCC MYA-4624 / DSM 980 / FGSC 10383</strain>
    </source>
</reference>
<organism>
    <name type="scientific">Podospora anserina (strain S / ATCC MYA-4624 / DSM 980 / FGSC 10383)</name>
    <name type="common">Pleurage anserina</name>
    <dbReference type="NCBI Taxonomy" id="515849"/>
    <lineage>
        <taxon>Eukaryota</taxon>
        <taxon>Fungi</taxon>
        <taxon>Dikarya</taxon>
        <taxon>Ascomycota</taxon>
        <taxon>Pezizomycotina</taxon>
        <taxon>Sordariomycetes</taxon>
        <taxon>Sordariomycetidae</taxon>
        <taxon>Sordariales</taxon>
        <taxon>Podosporaceae</taxon>
        <taxon>Podospora</taxon>
        <taxon>Podospora anserina</taxon>
    </lineage>
</organism>
<name>UTP25_PODAN</name>
<accession>B2B4I8</accession>
<accession>A0A090CC39</accession>
<dbReference type="EMBL" id="CU640366">
    <property type="protein sequence ID" value="CAP72713.1"/>
    <property type="molecule type" value="Genomic_DNA"/>
</dbReference>
<dbReference type="EMBL" id="FO904937">
    <property type="protein sequence ID" value="CDP25110.1"/>
    <property type="molecule type" value="Genomic_DNA"/>
</dbReference>
<dbReference type="RefSeq" id="XP_001910888.1">
    <property type="nucleotide sequence ID" value="XM_001910853.1"/>
</dbReference>
<dbReference type="FunCoup" id="B2B4I8">
    <property type="interactions" value="1202"/>
</dbReference>
<dbReference type="STRING" id="515849.B2B4I8"/>
<dbReference type="GeneID" id="6195830"/>
<dbReference type="KEGG" id="pan:PODANSg7930"/>
<dbReference type="VEuPathDB" id="FungiDB:PODANS_2_1430"/>
<dbReference type="eggNOG" id="KOG2340">
    <property type="taxonomic scope" value="Eukaryota"/>
</dbReference>
<dbReference type="HOGENOM" id="CLU_018705_0_1_1"/>
<dbReference type="InParanoid" id="B2B4I8"/>
<dbReference type="OrthoDB" id="10264378at2759"/>
<dbReference type="Proteomes" id="UP000001197">
    <property type="component" value="Chromosome 2"/>
</dbReference>
<dbReference type="GO" id="GO:0005730">
    <property type="term" value="C:nucleolus"/>
    <property type="evidence" value="ECO:0007669"/>
    <property type="project" value="UniProtKB-SubCell"/>
</dbReference>
<dbReference type="GO" id="GO:0032040">
    <property type="term" value="C:small-subunit processome"/>
    <property type="evidence" value="ECO:0007669"/>
    <property type="project" value="TreeGrafter"/>
</dbReference>
<dbReference type="GO" id="GO:0019843">
    <property type="term" value="F:rRNA binding"/>
    <property type="evidence" value="ECO:0007669"/>
    <property type="project" value="TreeGrafter"/>
</dbReference>
<dbReference type="GO" id="GO:0034511">
    <property type="term" value="F:U3 snoRNA binding"/>
    <property type="evidence" value="ECO:0007669"/>
    <property type="project" value="InterPro"/>
</dbReference>
<dbReference type="GO" id="GO:0000462">
    <property type="term" value="P:maturation of SSU-rRNA from tricistronic rRNA transcript (SSU-rRNA, 5.8S rRNA, LSU-rRNA)"/>
    <property type="evidence" value="ECO:0007669"/>
    <property type="project" value="TreeGrafter"/>
</dbReference>
<dbReference type="FunFam" id="3.40.50.300:FF:002356">
    <property type="entry name" value="U3 small nucleolar RNA-associated protein 25"/>
    <property type="match status" value="1"/>
</dbReference>
<dbReference type="Gene3D" id="3.40.50.300">
    <property type="entry name" value="P-loop containing nucleotide triphosphate hydrolases"/>
    <property type="match status" value="1"/>
</dbReference>
<dbReference type="InterPro" id="IPR027417">
    <property type="entry name" value="P-loop_NTPase"/>
</dbReference>
<dbReference type="InterPro" id="IPR010678">
    <property type="entry name" value="UTP25"/>
</dbReference>
<dbReference type="InterPro" id="IPR053939">
    <property type="entry name" value="UTP25_C"/>
</dbReference>
<dbReference type="InterPro" id="IPR053940">
    <property type="entry name" value="UTP25_NTPase-like"/>
</dbReference>
<dbReference type="PANTHER" id="PTHR12933">
    <property type="entry name" value="ORF PROTEIN-RELATED"/>
    <property type="match status" value="1"/>
</dbReference>
<dbReference type="PANTHER" id="PTHR12933:SF0">
    <property type="entry name" value="U3 SMALL NUCLEOLAR RNA-ASSOCIATED PROTEIN 25 HOMOLOG"/>
    <property type="match status" value="1"/>
</dbReference>
<dbReference type="Pfam" id="PF06862">
    <property type="entry name" value="Utp25_C"/>
    <property type="match status" value="1"/>
</dbReference>
<dbReference type="Pfam" id="PF22916">
    <property type="entry name" value="UTP25_NTPase-like"/>
    <property type="match status" value="1"/>
</dbReference>
<dbReference type="SUPFAM" id="SSF52540">
    <property type="entry name" value="P-loop containing nucleoside triphosphate hydrolases"/>
    <property type="match status" value="1"/>
</dbReference>
<protein>
    <recommendedName>
        <fullName>U3 small nucleolar RNA-associated protein 25</fullName>
        <shortName>U3 snoRNA-associated protein 25</shortName>
    </recommendedName>
    <alternativeName>
        <fullName>U three protein 25</fullName>
    </alternativeName>
</protein>
<feature type="chain" id="PRO_0000408135" description="U3 small nucleolar RNA-associated protein 25">
    <location>
        <begin position="1"/>
        <end position="660"/>
    </location>
</feature>
<feature type="region of interest" description="Disordered" evidence="2">
    <location>
        <begin position="1"/>
        <end position="133"/>
    </location>
</feature>
<feature type="compositionally biased region" description="Acidic residues" evidence="2">
    <location>
        <begin position="1"/>
        <end position="14"/>
    </location>
</feature>
<feature type="compositionally biased region" description="Acidic residues" evidence="2">
    <location>
        <begin position="58"/>
        <end position="104"/>
    </location>
</feature>
<gene>
    <name type="primary">UTP25</name>
    <name type="ordered locus">Pa_2_1430</name>
    <name type="ORF">PODANS_2_1430</name>
</gene>
<keyword id="KW-0539">Nucleus</keyword>
<keyword id="KW-1185">Reference proteome</keyword>
<keyword id="KW-0687">Ribonucleoprotein</keyword>
<keyword id="KW-0690">Ribosome biogenesis</keyword>
<keyword id="KW-0698">rRNA processing</keyword>
<comment type="function">
    <text evidence="1">DEAD-box RNA helicase-like protein required for pre-18S rRNA processing, specifically at sites A0, A1, and A2.</text>
</comment>
<comment type="subunit">
    <text evidence="1">Component of the ribosomal small subunit (SSU) processome composed of at least 40 protein subunits and snoRNA U3.</text>
</comment>
<comment type="subcellular location">
    <subcellularLocation>
        <location evidence="1">Nucleus</location>
        <location evidence="1">Nucleolus</location>
    </subcellularLocation>
</comment>
<comment type="similarity">
    <text evidence="3">Belongs to the UTP25 family.</text>
</comment>
<proteinExistence type="inferred from homology"/>
<sequence length="660" mass="76366">MSLVDSDSDEEEDATSAQPYVNLMKRLIETNPQKAKRRKLDHAPAEDNQPEAAPAPESGDEDERDDEQEEQRDVDEVEEAEEDTADIQPEDLFDEDDDLDETDPFETHISNPDENTVPPRVRAAQNGKWKMQRQPFESTRAYWSYPQTEDGQELPLPAPITSVSNLHLKKRLKEVMEFKRSTFGVVEKTVAPFLFNYRDMLYCDRTVGSSQDLRNLAALHALNHLYKTRDRVIKNNARLAKADANEDLELRDQGFTRPKVLMLLPTRQSCVKMVDSILSVCQPDQQENRKRFEDGYIEKLSKFSDDKPEDFRDLFSGNDDDMFRLGMKFTRKSVKYFSQFYNSDIIFASPLGLRMAIGSEEERKVDFDFLSSIELVIVDQADALLMQNWEHVEFIFEHLNIQPKDAHGCDFSRVRSWYLDDQAKYFRQTVVFSAFNTPELAELMRAHCHNWAGKVRLQQECPGTIQYLPVKARQTFSRFDAPTVAADPDARFNYFTKAIVPLLTKRNAKDANSTLIFIPSYLDFVRVRNFFANNPIVEAVTFGTISEYADIPEASRARSHFLTGRHKVLLYTERAHHFRRYQIKGVKRVIMYSLPDNPLFYREIAGGYLQKSEQSLMVEHGQGVVRVMFSKYDLMKLERIVGTSRVGKMIKEQGDTFDFV</sequence>
<evidence type="ECO:0000250" key="1"/>
<evidence type="ECO:0000256" key="2">
    <source>
        <dbReference type="SAM" id="MobiDB-lite"/>
    </source>
</evidence>
<evidence type="ECO:0000305" key="3"/>